<evidence type="ECO:0000255" key="1">
    <source>
        <dbReference type="PROSITE-ProRule" id="PRU00238"/>
    </source>
</evidence>
<organism>
    <name type="scientific">Tadarida brasiliensis</name>
    <name type="common">Brazilian free-tailed bat</name>
    <dbReference type="NCBI Taxonomy" id="9438"/>
    <lineage>
        <taxon>Eukaryota</taxon>
        <taxon>Metazoa</taxon>
        <taxon>Chordata</taxon>
        <taxon>Craniata</taxon>
        <taxon>Vertebrata</taxon>
        <taxon>Euteleostomi</taxon>
        <taxon>Mammalia</taxon>
        <taxon>Eutheria</taxon>
        <taxon>Laurasiatheria</taxon>
        <taxon>Chiroptera</taxon>
        <taxon>Yangochiroptera</taxon>
        <taxon>Molossidae</taxon>
        <taxon>Tadarida</taxon>
    </lineage>
</organism>
<dbReference type="PIR" id="A29391">
    <property type="entry name" value="A29391"/>
</dbReference>
<dbReference type="SMR" id="P11755"/>
<dbReference type="GO" id="GO:0072562">
    <property type="term" value="C:blood microparticle"/>
    <property type="evidence" value="ECO:0007669"/>
    <property type="project" value="TreeGrafter"/>
</dbReference>
<dbReference type="GO" id="GO:0031838">
    <property type="term" value="C:haptoglobin-hemoglobin complex"/>
    <property type="evidence" value="ECO:0007669"/>
    <property type="project" value="TreeGrafter"/>
</dbReference>
<dbReference type="GO" id="GO:0005833">
    <property type="term" value="C:hemoglobin complex"/>
    <property type="evidence" value="ECO:0007669"/>
    <property type="project" value="InterPro"/>
</dbReference>
<dbReference type="GO" id="GO:0031720">
    <property type="term" value="F:haptoglobin binding"/>
    <property type="evidence" value="ECO:0007669"/>
    <property type="project" value="TreeGrafter"/>
</dbReference>
<dbReference type="GO" id="GO:0020037">
    <property type="term" value="F:heme binding"/>
    <property type="evidence" value="ECO:0007669"/>
    <property type="project" value="InterPro"/>
</dbReference>
<dbReference type="GO" id="GO:0005506">
    <property type="term" value="F:iron ion binding"/>
    <property type="evidence" value="ECO:0007669"/>
    <property type="project" value="InterPro"/>
</dbReference>
<dbReference type="GO" id="GO:0043177">
    <property type="term" value="F:organic acid binding"/>
    <property type="evidence" value="ECO:0007669"/>
    <property type="project" value="TreeGrafter"/>
</dbReference>
<dbReference type="GO" id="GO:0019825">
    <property type="term" value="F:oxygen binding"/>
    <property type="evidence" value="ECO:0007669"/>
    <property type="project" value="InterPro"/>
</dbReference>
<dbReference type="GO" id="GO:0005344">
    <property type="term" value="F:oxygen carrier activity"/>
    <property type="evidence" value="ECO:0007669"/>
    <property type="project" value="UniProtKB-KW"/>
</dbReference>
<dbReference type="GO" id="GO:0004601">
    <property type="term" value="F:peroxidase activity"/>
    <property type="evidence" value="ECO:0007669"/>
    <property type="project" value="TreeGrafter"/>
</dbReference>
<dbReference type="GO" id="GO:0042744">
    <property type="term" value="P:hydrogen peroxide catabolic process"/>
    <property type="evidence" value="ECO:0007669"/>
    <property type="project" value="TreeGrafter"/>
</dbReference>
<dbReference type="CDD" id="cd08927">
    <property type="entry name" value="Hb-alpha-like"/>
    <property type="match status" value="1"/>
</dbReference>
<dbReference type="FunFam" id="1.10.490.10:FF:000002">
    <property type="entry name" value="Hemoglobin subunit alpha"/>
    <property type="match status" value="1"/>
</dbReference>
<dbReference type="Gene3D" id="1.10.490.10">
    <property type="entry name" value="Globins"/>
    <property type="match status" value="1"/>
</dbReference>
<dbReference type="InterPro" id="IPR000971">
    <property type="entry name" value="Globin"/>
</dbReference>
<dbReference type="InterPro" id="IPR009050">
    <property type="entry name" value="Globin-like_sf"/>
</dbReference>
<dbReference type="InterPro" id="IPR012292">
    <property type="entry name" value="Globin/Proto"/>
</dbReference>
<dbReference type="InterPro" id="IPR002338">
    <property type="entry name" value="Hemoglobin_a-typ"/>
</dbReference>
<dbReference type="InterPro" id="IPR050056">
    <property type="entry name" value="Hemoglobin_oxygen_transport"/>
</dbReference>
<dbReference type="InterPro" id="IPR002339">
    <property type="entry name" value="Hemoglobin_pi"/>
</dbReference>
<dbReference type="PANTHER" id="PTHR11442">
    <property type="entry name" value="HEMOGLOBIN FAMILY MEMBER"/>
    <property type="match status" value="1"/>
</dbReference>
<dbReference type="PANTHER" id="PTHR11442:SF48">
    <property type="entry name" value="HEMOGLOBIN SUBUNIT ALPHA"/>
    <property type="match status" value="1"/>
</dbReference>
<dbReference type="Pfam" id="PF00042">
    <property type="entry name" value="Globin"/>
    <property type="match status" value="1"/>
</dbReference>
<dbReference type="PRINTS" id="PR00612">
    <property type="entry name" value="ALPHAHAEM"/>
</dbReference>
<dbReference type="PRINTS" id="PR00815">
    <property type="entry name" value="PIHAEM"/>
</dbReference>
<dbReference type="SUPFAM" id="SSF46458">
    <property type="entry name" value="Globin-like"/>
    <property type="match status" value="1"/>
</dbReference>
<dbReference type="PROSITE" id="PS01033">
    <property type="entry name" value="GLOBIN"/>
    <property type="match status" value="1"/>
</dbReference>
<reference key="1">
    <citation type="journal article" date="1987" name="Biol. Chem. Hoppe-Seyler">
        <title>Primary structure and functional properties of the hemoglobin from the free-tailed bat Tadarida brasiliensis (Chiroptera). Small effect of carbon dioxide on oxygen affinity.</title>
        <authorList>
            <person name="Kleinschmidt T."/>
            <person name="Ruecknagel K.P."/>
            <person name="Weber R.E."/>
            <person name="Koop B.F."/>
            <person name="Braunitzer G."/>
        </authorList>
    </citation>
    <scope>PROTEIN SEQUENCE</scope>
</reference>
<feature type="chain" id="PRO_0000052775" description="Hemoglobin subunit alpha-1">
    <location>
        <begin position="1"/>
        <end position="141"/>
    </location>
</feature>
<feature type="domain" description="Globin" evidence="1">
    <location>
        <begin position="1"/>
        <end position="141"/>
    </location>
</feature>
<feature type="binding site" evidence="1">
    <location>
        <position position="58"/>
    </location>
    <ligand>
        <name>O2</name>
        <dbReference type="ChEBI" id="CHEBI:15379"/>
    </ligand>
</feature>
<feature type="binding site" description="proximal binding residue" evidence="1">
    <location>
        <position position="87"/>
    </location>
    <ligand>
        <name>heme b</name>
        <dbReference type="ChEBI" id="CHEBI:60344"/>
    </ligand>
    <ligandPart>
        <name>Fe</name>
        <dbReference type="ChEBI" id="CHEBI:18248"/>
    </ligandPart>
</feature>
<name>HBA1_TADBR</name>
<proteinExistence type="evidence at protein level"/>
<accession>P11755</accession>
<comment type="function">
    <text>Involved in oxygen transport from the lung to the various peripheral tissues.</text>
</comment>
<comment type="subunit">
    <text>Heterotetramer of two alpha chains and two beta chains.</text>
</comment>
<comment type="tissue specificity">
    <text>Red blood cells.</text>
</comment>
<comment type="similarity">
    <text evidence="1">Belongs to the globin family.</text>
</comment>
<keyword id="KW-0903">Direct protein sequencing</keyword>
<keyword id="KW-0349">Heme</keyword>
<keyword id="KW-0408">Iron</keyword>
<keyword id="KW-0479">Metal-binding</keyword>
<keyword id="KW-0561">Oxygen transport</keyword>
<keyword id="KW-0813">Transport</keyword>
<sequence>VLSPEDKNNVKAAWSKVGGQAGDYGAEALERMFLSFPTTKTYFPHFDLSHGSAQVKGHGKKVGEALTTAVNHMDDLPGALSTLSDLHAYKLRVDPVNFKLLSHCLLVTLACHNPGEFTPAVHASLDKFLASVSTVLTSKYR</sequence>
<protein>
    <recommendedName>
        <fullName>Hemoglobin subunit alpha-1</fullName>
    </recommendedName>
    <alternativeName>
        <fullName>Alpha-1-globin</fullName>
    </alternativeName>
    <alternativeName>
        <fullName>Hemoglobin alpha-1 chain</fullName>
    </alternativeName>
</protein>